<protein>
    <recommendedName>
        <fullName evidence="1">Cysteine--tRNA ligase</fullName>
        <ecNumber evidence="1">6.1.1.16</ecNumber>
    </recommendedName>
    <alternativeName>
        <fullName evidence="1">Cysteinyl-tRNA synthetase</fullName>
        <shortName evidence="1">CysRS</shortName>
    </alternativeName>
</protein>
<evidence type="ECO:0000255" key="1">
    <source>
        <dbReference type="HAMAP-Rule" id="MF_00041"/>
    </source>
</evidence>
<proteinExistence type="inferred from homology"/>
<sequence>MLQVYNTLTRNKETFKPLKEGEVSIYACGPTVYNMPHIGNYRTFLLADTVVRTLQYLGYKVKLVMNITDIDDKTIRDSKAAGMSLKDFTDKYSAEFFKGLDMLNIKRASAYPRATENVDGMIELAQKLIEKGLAYEKGGSVYYRISGFPDYGKLSKLDFDSIRIGASVDVDEYDKDNPRDFALLKASAPEEIERSIYYESPWGKIRPGWHIECSVMAMNSFGPTLDVHIGGVDLIFPHHENEIAQSEGATGIPFVRHWIHGEHLIVEGEKMSKSKGNVFTLPEIVEMYGGEVVRFMFLSVHYRKKLDYSETFAENAKNNYLKLKETLDNLEFALKNVEDEPGPGDLETLKTLPELENRFREALEDDFNTPKAITVFRELSRTANVYLETGKNMQVLEEIHALYKRFSDTLGIFAKAGGEEVPGEVVRLVEEREEARKIKDWKTSDAIREKIKSLGYIVQDTKEGPKIKKSEES</sequence>
<comment type="catalytic activity">
    <reaction evidence="1">
        <text>tRNA(Cys) + L-cysteine + ATP = L-cysteinyl-tRNA(Cys) + AMP + diphosphate</text>
        <dbReference type="Rhea" id="RHEA:17773"/>
        <dbReference type="Rhea" id="RHEA-COMP:9661"/>
        <dbReference type="Rhea" id="RHEA-COMP:9679"/>
        <dbReference type="ChEBI" id="CHEBI:30616"/>
        <dbReference type="ChEBI" id="CHEBI:33019"/>
        <dbReference type="ChEBI" id="CHEBI:35235"/>
        <dbReference type="ChEBI" id="CHEBI:78442"/>
        <dbReference type="ChEBI" id="CHEBI:78517"/>
        <dbReference type="ChEBI" id="CHEBI:456215"/>
        <dbReference type="EC" id="6.1.1.16"/>
    </reaction>
</comment>
<comment type="cofactor">
    <cofactor evidence="1">
        <name>Zn(2+)</name>
        <dbReference type="ChEBI" id="CHEBI:29105"/>
    </cofactor>
    <text evidence="1">Binds 1 zinc ion per subunit.</text>
</comment>
<comment type="subcellular location">
    <subcellularLocation>
        <location evidence="1">Cytoplasm</location>
    </subcellularLocation>
</comment>
<comment type="similarity">
    <text evidence="1">Belongs to the class-I aminoacyl-tRNA synthetase family.</text>
</comment>
<keyword id="KW-0030">Aminoacyl-tRNA synthetase</keyword>
<keyword id="KW-0067">ATP-binding</keyword>
<keyword id="KW-0963">Cytoplasm</keyword>
<keyword id="KW-0436">Ligase</keyword>
<keyword id="KW-0479">Metal-binding</keyword>
<keyword id="KW-0547">Nucleotide-binding</keyword>
<keyword id="KW-0648">Protein biosynthesis</keyword>
<keyword id="KW-0862">Zinc</keyword>
<reference key="1">
    <citation type="journal article" date="2002" name="J. Mol. Microbiol. Biotechnol.">
        <title>The genome of Methanosarcina mazei: evidence for lateral gene transfer between Bacteria and Archaea.</title>
        <authorList>
            <person name="Deppenmeier U."/>
            <person name="Johann A."/>
            <person name="Hartsch T."/>
            <person name="Merkl R."/>
            <person name="Schmitz R.A."/>
            <person name="Martinez-Arias R."/>
            <person name="Henne A."/>
            <person name="Wiezer A."/>
            <person name="Baeumer S."/>
            <person name="Jacobi C."/>
            <person name="Brueggemann H."/>
            <person name="Lienard T."/>
            <person name="Christmann A."/>
            <person name="Boemecke M."/>
            <person name="Steckel S."/>
            <person name="Bhattacharyya A."/>
            <person name="Lykidis A."/>
            <person name="Overbeek R."/>
            <person name="Klenk H.-P."/>
            <person name="Gunsalus R.P."/>
            <person name="Fritz H.-J."/>
            <person name="Gottschalk G."/>
        </authorList>
    </citation>
    <scope>NUCLEOTIDE SEQUENCE [LARGE SCALE GENOMIC DNA]</scope>
    <source>
        <strain>ATCC BAA-159 / DSM 3647 / Goe1 / Go1 / JCM 11833 / OCM 88</strain>
    </source>
</reference>
<feature type="chain" id="PRO_0000159537" description="Cysteine--tRNA ligase">
    <location>
        <begin position="1"/>
        <end position="473"/>
    </location>
</feature>
<feature type="short sequence motif" description="'HIGH' region">
    <location>
        <begin position="30"/>
        <end position="40"/>
    </location>
</feature>
<feature type="short sequence motif" description="'KMSKS' region">
    <location>
        <begin position="270"/>
        <end position="274"/>
    </location>
</feature>
<feature type="binding site" evidence="1">
    <location>
        <position position="28"/>
    </location>
    <ligand>
        <name>Zn(2+)</name>
        <dbReference type="ChEBI" id="CHEBI:29105"/>
    </ligand>
</feature>
<feature type="binding site" evidence="1">
    <location>
        <position position="213"/>
    </location>
    <ligand>
        <name>Zn(2+)</name>
        <dbReference type="ChEBI" id="CHEBI:29105"/>
    </ligand>
</feature>
<feature type="binding site" evidence="1">
    <location>
        <position position="238"/>
    </location>
    <ligand>
        <name>Zn(2+)</name>
        <dbReference type="ChEBI" id="CHEBI:29105"/>
    </ligand>
</feature>
<feature type="binding site" evidence="1">
    <location>
        <position position="242"/>
    </location>
    <ligand>
        <name>Zn(2+)</name>
        <dbReference type="ChEBI" id="CHEBI:29105"/>
    </ligand>
</feature>
<feature type="binding site" evidence="1">
    <location>
        <position position="273"/>
    </location>
    <ligand>
        <name>ATP</name>
        <dbReference type="ChEBI" id="CHEBI:30616"/>
    </ligand>
</feature>
<accession>Q8PVQ1</accession>
<dbReference type="EC" id="6.1.1.16" evidence="1"/>
<dbReference type="EMBL" id="AE008384">
    <property type="protein sequence ID" value="AAM31607.1"/>
    <property type="molecule type" value="Genomic_DNA"/>
</dbReference>
<dbReference type="RefSeq" id="WP_011033844.1">
    <property type="nucleotide sequence ID" value="NC_003901.1"/>
</dbReference>
<dbReference type="SMR" id="Q8PVQ1"/>
<dbReference type="GeneID" id="1480253"/>
<dbReference type="GeneID" id="82160965"/>
<dbReference type="KEGG" id="mma:MM_1911"/>
<dbReference type="PATRIC" id="fig|192952.21.peg.2201"/>
<dbReference type="eggNOG" id="arCOG00486">
    <property type="taxonomic scope" value="Archaea"/>
</dbReference>
<dbReference type="HOGENOM" id="CLU_013528_0_1_2"/>
<dbReference type="Proteomes" id="UP000000595">
    <property type="component" value="Chromosome"/>
</dbReference>
<dbReference type="GO" id="GO:0005737">
    <property type="term" value="C:cytoplasm"/>
    <property type="evidence" value="ECO:0007669"/>
    <property type="project" value="UniProtKB-SubCell"/>
</dbReference>
<dbReference type="GO" id="GO:0005524">
    <property type="term" value="F:ATP binding"/>
    <property type="evidence" value="ECO:0007669"/>
    <property type="project" value="UniProtKB-UniRule"/>
</dbReference>
<dbReference type="GO" id="GO:0004817">
    <property type="term" value="F:cysteine-tRNA ligase activity"/>
    <property type="evidence" value="ECO:0007669"/>
    <property type="project" value="UniProtKB-UniRule"/>
</dbReference>
<dbReference type="GO" id="GO:0008270">
    <property type="term" value="F:zinc ion binding"/>
    <property type="evidence" value="ECO:0007669"/>
    <property type="project" value="UniProtKB-UniRule"/>
</dbReference>
<dbReference type="GO" id="GO:0006423">
    <property type="term" value="P:cysteinyl-tRNA aminoacylation"/>
    <property type="evidence" value="ECO:0007669"/>
    <property type="project" value="UniProtKB-UniRule"/>
</dbReference>
<dbReference type="CDD" id="cd00672">
    <property type="entry name" value="CysRS_core"/>
    <property type="match status" value="1"/>
</dbReference>
<dbReference type="FunFam" id="3.40.50.620:FF:000130">
    <property type="entry name" value="Cysteine--tRNA ligase"/>
    <property type="match status" value="1"/>
</dbReference>
<dbReference type="Gene3D" id="1.20.120.1910">
    <property type="entry name" value="Cysteine-tRNA ligase, C-terminal anti-codon recognition domain"/>
    <property type="match status" value="1"/>
</dbReference>
<dbReference type="Gene3D" id="3.40.50.620">
    <property type="entry name" value="HUPs"/>
    <property type="match status" value="1"/>
</dbReference>
<dbReference type="HAMAP" id="MF_00041">
    <property type="entry name" value="Cys_tRNA_synth"/>
    <property type="match status" value="1"/>
</dbReference>
<dbReference type="InterPro" id="IPR015803">
    <property type="entry name" value="Cys-tRNA-ligase"/>
</dbReference>
<dbReference type="InterPro" id="IPR015273">
    <property type="entry name" value="Cys-tRNA-synt_Ia_DALR"/>
</dbReference>
<dbReference type="InterPro" id="IPR024909">
    <property type="entry name" value="Cys-tRNA/MSH_ligase"/>
</dbReference>
<dbReference type="InterPro" id="IPR056411">
    <property type="entry name" value="CysS_C"/>
</dbReference>
<dbReference type="InterPro" id="IPR014729">
    <property type="entry name" value="Rossmann-like_a/b/a_fold"/>
</dbReference>
<dbReference type="InterPro" id="IPR032678">
    <property type="entry name" value="tRNA-synt_1_cat_dom"/>
</dbReference>
<dbReference type="InterPro" id="IPR009080">
    <property type="entry name" value="tRNAsynth_Ia_anticodon-bd"/>
</dbReference>
<dbReference type="NCBIfam" id="TIGR00435">
    <property type="entry name" value="cysS"/>
    <property type="match status" value="1"/>
</dbReference>
<dbReference type="PANTHER" id="PTHR10890:SF3">
    <property type="entry name" value="CYSTEINE--TRNA LIGASE, CYTOPLASMIC"/>
    <property type="match status" value="1"/>
</dbReference>
<dbReference type="PANTHER" id="PTHR10890">
    <property type="entry name" value="CYSTEINYL-TRNA SYNTHETASE"/>
    <property type="match status" value="1"/>
</dbReference>
<dbReference type="Pfam" id="PF23493">
    <property type="entry name" value="CysS_C"/>
    <property type="match status" value="1"/>
</dbReference>
<dbReference type="Pfam" id="PF09190">
    <property type="entry name" value="DALR_2"/>
    <property type="match status" value="1"/>
</dbReference>
<dbReference type="Pfam" id="PF01406">
    <property type="entry name" value="tRNA-synt_1e"/>
    <property type="match status" value="1"/>
</dbReference>
<dbReference type="PRINTS" id="PR00983">
    <property type="entry name" value="TRNASYNTHCYS"/>
</dbReference>
<dbReference type="SMART" id="SM00840">
    <property type="entry name" value="DALR_2"/>
    <property type="match status" value="1"/>
</dbReference>
<dbReference type="SUPFAM" id="SSF47323">
    <property type="entry name" value="Anticodon-binding domain of a subclass of class I aminoacyl-tRNA synthetases"/>
    <property type="match status" value="1"/>
</dbReference>
<dbReference type="SUPFAM" id="SSF52374">
    <property type="entry name" value="Nucleotidylyl transferase"/>
    <property type="match status" value="1"/>
</dbReference>
<organism>
    <name type="scientific">Methanosarcina mazei (strain ATCC BAA-159 / DSM 3647 / Goe1 / Go1 / JCM 11833 / OCM 88)</name>
    <name type="common">Methanosarcina frisia</name>
    <dbReference type="NCBI Taxonomy" id="192952"/>
    <lineage>
        <taxon>Archaea</taxon>
        <taxon>Methanobacteriati</taxon>
        <taxon>Methanobacteriota</taxon>
        <taxon>Stenosarchaea group</taxon>
        <taxon>Methanomicrobia</taxon>
        <taxon>Methanosarcinales</taxon>
        <taxon>Methanosarcinaceae</taxon>
        <taxon>Methanosarcina</taxon>
    </lineage>
</organism>
<gene>
    <name evidence="1" type="primary">cysS</name>
    <name type="ordered locus">MM_1911</name>
</gene>
<name>SYC_METMA</name>